<proteinExistence type="inferred from homology"/>
<evidence type="ECO:0000255" key="1">
    <source>
        <dbReference type="HAMAP-Rule" id="MF_01825"/>
    </source>
</evidence>
<keyword id="KW-0963">Cytoplasm</keyword>
<keyword id="KW-0520">NAD</keyword>
<keyword id="KW-0560">Oxidoreductase</keyword>
<keyword id="KW-0664">Pyridoxine biosynthesis</keyword>
<keyword id="KW-1185">Reference proteome</keyword>
<comment type="function">
    <text evidence="1">Catalyzes the oxidation of erythronate-4-phosphate to 3-hydroxy-2-oxo-4-phosphonooxybutanoate.</text>
</comment>
<comment type="catalytic activity">
    <reaction evidence="1">
        <text>4-phospho-D-erythronate + NAD(+) = (R)-3-hydroxy-2-oxo-4-phosphooxybutanoate + NADH + H(+)</text>
        <dbReference type="Rhea" id="RHEA:18829"/>
        <dbReference type="ChEBI" id="CHEBI:15378"/>
        <dbReference type="ChEBI" id="CHEBI:57540"/>
        <dbReference type="ChEBI" id="CHEBI:57945"/>
        <dbReference type="ChEBI" id="CHEBI:58538"/>
        <dbReference type="ChEBI" id="CHEBI:58766"/>
        <dbReference type="EC" id="1.1.1.290"/>
    </reaction>
</comment>
<comment type="pathway">
    <text evidence="1">Cofactor biosynthesis; pyridoxine 5'-phosphate biosynthesis; pyridoxine 5'-phosphate from D-erythrose 4-phosphate: step 2/5.</text>
</comment>
<comment type="subunit">
    <text evidence="1">Homodimer.</text>
</comment>
<comment type="subcellular location">
    <subcellularLocation>
        <location evidence="1">Cytoplasm</location>
    </subcellularLocation>
</comment>
<comment type="similarity">
    <text evidence="1">Belongs to the D-isomer specific 2-hydroxyacid dehydrogenase family. PdxB subfamily.</text>
</comment>
<name>PDXB_SHEAM</name>
<gene>
    <name evidence="1" type="primary">pdxB</name>
    <name type="ordered locus">Sama_2153</name>
</gene>
<accession>A1S7K2</accession>
<dbReference type="EC" id="1.1.1.290" evidence="1"/>
<dbReference type="EMBL" id="CP000507">
    <property type="protein sequence ID" value="ABM00359.1"/>
    <property type="molecule type" value="Genomic_DNA"/>
</dbReference>
<dbReference type="RefSeq" id="WP_011760266.1">
    <property type="nucleotide sequence ID" value="NC_008700.1"/>
</dbReference>
<dbReference type="SMR" id="A1S7K2"/>
<dbReference type="STRING" id="326297.Sama_2153"/>
<dbReference type="KEGG" id="saz:Sama_2153"/>
<dbReference type="eggNOG" id="COG0111">
    <property type="taxonomic scope" value="Bacteria"/>
</dbReference>
<dbReference type="HOGENOM" id="CLU_019796_4_0_6"/>
<dbReference type="OrthoDB" id="9770208at2"/>
<dbReference type="UniPathway" id="UPA00244">
    <property type="reaction ID" value="UER00310"/>
</dbReference>
<dbReference type="Proteomes" id="UP000009175">
    <property type="component" value="Chromosome"/>
</dbReference>
<dbReference type="GO" id="GO:0005829">
    <property type="term" value="C:cytosol"/>
    <property type="evidence" value="ECO:0007669"/>
    <property type="project" value="TreeGrafter"/>
</dbReference>
<dbReference type="GO" id="GO:0033711">
    <property type="term" value="F:4-phosphoerythronate dehydrogenase activity"/>
    <property type="evidence" value="ECO:0007669"/>
    <property type="project" value="UniProtKB-EC"/>
</dbReference>
<dbReference type="GO" id="GO:0051287">
    <property type="term" value="F:NAD binding"/>
    <property type="evidence" value="ECO:0007669"/>
    <property type="project" value="InterPro"/>
</dbReference>
<dbReference type="GO" id="GO:0046983">
    <property type="term" value="F:protein dimerization activity"/>
    <property type="evidence" value="ECO:0007669"/>
    <property type="project" value="InterPro"/>
</dbReference>
<dbReference type="GO" id="GO:0036001">
    <property type="term" value="P:'de novo' pyridoxal 5'-phosphate biosynthetic process"/>
    <property type="evidence" value="ECO:0007669"/>
    <property type="project" value="TreeGrafter"/>
</dbReference>
<dbReference type="GO" id="GO:0008615">
    <property type="term" value="P:pyridoxine biosynthetic process"/>
    <property type="evidence" value="ECO:0007669"/>
    <property type="project" value="UniProtKB-UniRule"/>
</dbReference>
<dbReference type="CDD" id="cd12158">
    <property type="entry name" value="ErythrP_dh"/>
    <property type="match status" value="1"/>
</dbReference>
<dbReference type="Gene3D" id="3.30.1370.170">
    <property type="match status" value="1"/>
</dbReference>
<dbReference type="Gene3D" id="3.40.50.720">
    <property type="entry name" value="NAD(P)-binding Rossmann-like Domain"/>
    <property type="match status" value="2"/>
</dbReference>
<dbReference type="HAMAP" id="MF_01825">
    <property type="entry name" value="PdxB"/>
    <property type="match status" value="1"/>
</dbReference>
<dbReference type="InterPro" id="IPR006139">
    <property type="entry name" value="D-isomer_2_OHA_DH_cat_dom"/>
</dbReference>
<dbReference type="InterPro" id="IPR029753">
    <property type="entry name" value="D-isomer_DH_CS"/>
</dbReference>
<dbReference type="InterPro" id="IPR006140">
    <property type="entry name" value="D-isomer_DH_NAD-bd"/>
</dbReference>
<dbReference type="InterPro" id="IPR020921">
    <property type="entry name" value="Erythronate-4-P_DHase"/>
</dbReference>
<dbReference type="InterPro" id="IPR024531">
    <property type="entry name" value="Erythronate-4-P_DHase_dimer"/>
</dbReference>
<dbReference type="InterPro" id="IPR036291">
    <property type="entry name" value="NAD(P)-bd_dom_sf"/>
</dbReference>
<dbReference type="InterPro" id="IPR038251">
    <property type="entry name" value="PdxB_dimer_sf"/>
</dbReference>
<dbReference type="PANTHER" id="PTHR42938">
    <property type="entry name" value="FORMATE DEHYDROGENASE 1"/>
    <property type="match status" value="1"/>
</dbReference>
<dbReference type="PANTHER" id="PTHR42938:SF9">
    <property type="entry name" value="FORMATE DEHYDROGENASE 1"/>
    <property type="match status" value="1"/>
</dbReference>
<dbReference type="Pfam" id="PF00389">
    <property type="entry name" value="2-Hacid_dh"/>
    <property type="match status" value="1"/>
</dbReference>
<dbReference type="Pfam" id="PF02826">
    <property type="entry name" value="2-Hacid_dh_C"/>
    <property type="match status" value="1"/>
</dbReference>
<dbReference type="Pfam" id="PF11890">
    <property type="entry name" value="DUF3410"/>
    <property type="match status" value="1"/>
</dbReference>
<dbReference type="SUPFAM" id="SSF52283">
    <property type="entry name" value="Formate/glycerate dehydrogenase catalytic domain-like"/>
    <property type="match status" value="1"/>
</dbReference>
<dbReference type="SUPFAM" id="SSF51735">
    <property type="entry name" value="NAD(P)-binding Rossmann-fold domains"/>
    <property type="match status" value="1"/>
</dbReference>
<dbReference type="PROSITE" id="PS00671">
    <property type="entry name" value="D_2_HYDROXYACID_DH_3"/>
    <property type="match status" value="1"/>
</dbReference>
<reference key="1">
    <citation type="submission" date="2006-12" db="EMBL/GenBank/DDBJ databases">
        <title>Complete sequence of Shewanella amazonensis SB2B.</title>
        <authorList>
            <consortium name="US DOE Joint Genome Institute"/>
            <person name="Copeland A."/>
            <person name="Lucas S."/>
            <person name="Lapidus A."/>
            <person name="Barry K."/>
            <person name="Detter J.C."/>
            <person name="Glavina del Rio T."/>
            <person name="Hammon N."/>
            <person name="Israni S."/>
            <person name="Dalin E."/>
            <person name="Tice H."/>
            <person name="Pitluck S."/>
            <person name="Munk A.C."/>
            <person name="Brettin T."/>
            <person name="Bruce D."/>
            <person name="Han C."/>
            <person name="Tapia R."/>
            <person name="Gilna P."/>
            <person name="Schmutz J."/>
            <person name="Larimer F."/>
            <person name="Land M."/>
            <person name="Hauser L."/>
            <person name="Kyrpides N."/>
            <person name="Mikhailova N."/>
            <person name="Fredrickson J."/>
            <person name="Richardson P."/>
        </authorList>
    </citation>
    <scope>NUCLEOTIDE SEQUENCE [LARGE SCALE GENOMIC DNA]</scope>
    <source>
        <strain>ATCC BAA-1098 / SB2B</strain>
    </source>
</reference>
<protein>
    <recommendedName>
        <fullName evidence="1">Erythronate-4-phosphate dehydrogenase</fullName>
        <ecNumber evidence="1">1.1.1.290</ecNumber>
    </recommendedName>
</protein>
<sequence length="375" mass="41860">MKIIADENMPYVDVLFGELGEIEYVNGRTLAPEQLADADVLLVRSVTQVNEALLCQNQQLKFVGSATIGTDHVDTAYLKSRGIPFTNAPGCNATAVGEYAFIAMLELAQRYRQPLKDKKVAVIGAGNTGTATARCLEAYGVEHRLCDPVLAAQGDNRQFYELDELIAWADVISLHVPITKGGDHPTWYLFDQQRLEALKTGAWLLNCCRGEVIDNRALIEVKQRRVDIKLVLDVWEGEPSPMLALVPLVDIATPHIAGYSLEGKARGTFMLYEALCRVMGKTGENSFHSLLPPFFLGSMQVRELGDERALLTLCRTVYDLRDDDIHFRQSGTDRLGFDKMRKNHRHRREFSALKLENAKGSEVNWLSFLGFSNVG</sequence>
<organism>
    <name type="scientific">Shewanella amazonensis (strain ATCC BAA-1098 / SB2B)</name>
    <dbReference type="NCBI Taxonomy" id="326297"/>
    <lineage>
        <taxon>Bacteria</taxon>
        <taxon>Pseudomonadati</taxon>
        <taxon>Pseudomonadota</taxon>
        <taxon>Gammaproteobacteria</taxon>
        <taxon>Alteromonadales</taxon>
        <taxon>Shewanellaceae</taxon>
        <taxon>Shewanella</taxon>
    </lineage>
</organism>
<feature type="chain" id="PRO_0000297465" description="Erythronate-4-phosphate dehydrogenase">
    <location>
        <begin position="1"/>
        <end position="375"/>
    </location>
</feature>
<feature type="active site" evidence="1">
    <location>
        <position position="209"/>
    </location>
</feature>
<feature type="active site" evidence="1">
    <location>
        <position position="238"/>
    </location>
</feature>
<feature type="active site" description="Proton donor" evidence="1">
    <location>
        <position position="255"/>
    </location>
</feature>
<feature type="binding site" evidence="1">
    <location>
        <position position="45"/>
    </location>
    <ligand>
        <name>substrate</name>
    </ligand>
</feature>
<feature type="binding site" evidence="1">
    <location>
        <position position="67"/>
    </location>
    <ligand>
        <name>substrate</name>
    </ligand>
</feature>
<feature type="binding site" evidence="1">
    <location>
        <position position="147"/>
    </location>
    <ligand>
        <name>NAD(+)</name>
        <dbReference type="ChEBI" id="CHEBI:57540"/>
    </ligand>
</feature>
<feature type="binding site" evidence="1">
    <location>
        <position position="233"/>
    </location>
    <ligand>
        <name>NAD(+)</name>
        <dbReference type="ChEBI" id="CHEBI:57540"/>
    </ligand>
</feature>
<feature type="binding site" evidence="1">
    <location>
        <position position="258"/>
    </location>
    <ligand>
        <name>NAD(+)</name>
        <dbReference type="ChEBI" id="CHEBI:57540"/>
    </ligand>
</feature>
<feature type="binding site" evidence="1">
    <location>
        <position position="259"/>
    </location>
    <ligand>
        <name>substrate</name>
    </ligand>
</feature>